<proteinExistence type="inferred from homology"/>
<feature type="chain" id="PRO_0000356440" description="Large ribosomal subunit protein bL33">
    <location>
        <begin position="1"/>
        <end position="49"/>
    </location>
</feature>
<reference key="1">
    <citation type="journal article" date="2006" name="Genome Res.">
        <title>Skewed genomic variability in strains of the toxigenic bacterial pathogen, Clostridium perfringens.</title>
        <authorList>
            <person name="Myers G.S.A."/>
            <person name="Rasko D.A."/>
            <person name="Cheung J.K."/>
            <person name="Ravel J."/>
            <person name="Seshadri R."/>
            <person name="DeBoy R.T."/>
            <person name="Ren Q."/>
            <person name="Varga J."/>
            <person name="Awad M.M."/>
            <person name="Brinkac L.M."/>
            <person name="Daugherty S.C."/>
            <person name="Haft D.H."/>
            <person name="Dodson R.J."/>
            <person name="Madupu R."/>
            <person name="Nelson W.C."/>
            <person name="Rosovitz M.J."/>
            <person name="Sullivan S.A."/>
            <person name="Khouri H."/>
            <person name="Dimitrov G.I."/>
            <person name="Watkins K.L."/>
            <person name="Mulligan S."/>
            <person name="Benton J."/>
            <person name="Radune D."/>
            <person name="Fisher D.J."/>
            <person name="Atkins H.S."/>
            <person name="Hiscox T."/>
            <person name="Jost B.H."/>
            <person name="Billington S.J."/>
            <person name="Songer J.G."/>
            <person name="McClane B.A."/>
            <person name="Titball R.W."/>
            <person name="Rood J.I."/>
            <person name="Melville S.B."/>
            <person name="Paulsen I.T."/>
        </authorList>
    </citation>
    <scope>NUCLEOTIDE SEQUENCE [LARGE SCALE GENOMIC DNA]</scope>
    <source>
        <strain>SM101 / Type A</strain>
    </source>
</reference>
<comment type="similarity">
    <text evidence="1">Belongs to the bacterial ribosomal protein bL33 family.</text>
</comment>
<comment type="sequence caution" evidence="2">
    <conflict type="erroneous initiation">
        <sequence resource="EMBL-CDS" id="ABG86504"/>
    </conflict>
</comment>
<organism>
    <name type="scientific">Clostridium perfringens (strain SM101 / Type A)</name>
    <dbReference type="NCBI Taxonomy" id="289380"/>
    <lineage>
        <taxon>Bacteria</taxon>
        <taxon>Bacillati</taxon>
        <taxon>Bacillota</taxon>
        <taxon>Clostridia</taxon>
        <taxon>Eubacteriales</taxon>
        <taxon>Clostridiaceae</taxon>
        <taxon>Clostridium</taxon>
    </lineage>
</organism>
<evidence type="ECO:0000255" key="1">
    <source>
        <dbReference type="HAMAP-Rule" id="MF_00294"/>
    </source>
</evidence>
<evidence type="ECO:0000305" key="2"/>
<accession>Q0SQC9</accession>
<sequence length="49" mass="5992">MRVKVTLACTECKQRNYNTMKNKKNDPNRIEMKKYCKFCKTHTLHRETK</sequence>
<dbReference type="EMBL" id="CP000312">
    <property type="protein sequence ID" value="ABG86504.1"/>
    <property type="status" value="ALT_INIT"/>
    <property type="molecule type" value="Genomic_DNA"/>
</dbReference>
<dbReference type="RefSeq" id="WP_003482374.1">
    <property type="nucleotide sequence ID" value="NZ_CAXVKH010000004.1"/>
</dbReference>
<dbReference type="SMR" id="Q0SQC9"/>
<dbReference type="GeneID" id="93000994"/>
<dbReference type="KEGG" id="cpr:CPR_2415"/>
<dbReference type="Proteomes" id="UP000001824">
    <property type="component" value="Chromosome"/>
</dbReference>
<dbReference type="GO" id="GO:0005737">
    <property type="term" value="C:cytoplasm"/>
    <property type="evidence" value="ECO:0007669"/>
    <property type="project" value="UniProtKB-ARBA"/>
</dbReference>
<dbReference type="GO" id="GO:1990904">
    <property type="term" value="C:ribonucleoprotein complex"/>
    <property type="evidence" value="ECO:0007669"/>
    <property type="project" value="UniProtKB-KW"/>
</dbReference>
<dbReference type="GO" id="GO:0005840">
    <property type="term" value="C:ribosome"/>
    <property type="evidence" value="ECO:0007669"/>
    <property type="project" value="UniProtKB-KW"/>
</dbReference>
<dbReference type="GO" id="GO:0003735">
    <property type="term" value="F:structural constituent of ribosome"/>
    <property type="evidence" value="ECO:0007669"/>
    <property type="project" value="InterPro"/>
</dbReference>
<dbReference type="GO" id="GO:0006412">
    <property type="term" value="P:translation"/>
    <property type="evidence" value="ECO:0007669"/>
    <property type="project" value="UniProtKB-UniRule"/>
</dbReference>
<dbReference type="Gene3D" id="2.20.28.120">
    <property type="entry name" value="Ribosomal protein L33"/>
    <property type="match status" value="1"/>
</dbReference>
<dbReference type="HAMAP" id="MF_00294">
    <property type="entry name" value="Ribosomal_bL33"/>
    <property type="match status" value="1"/>
</dbReference>
<dbReference type="InterPro" id="IPR001705">
    <property type="entry name" value="Ribosomal_bL33"/>
</dbReference>
<dbReference type="InterPro" id="IPR018264">
    <property type="entry name" value="Ribosomal_bL33_CS"/>
</dbReference>
<dbReference type="InterPro" id="IPR038584">
    <property type="entry name" value="Ribosomal_bL33_sf"/>
</dbReference>
<dbReference type="InterPro" id="IPR011332">
    <property type="entry name" value="Ribosomal_zn-bd"/>
</dbReference>
<dbReference type="NCBIfam" id="NF001764">
    <property type="entry name" value="PRK00504.1"/>
    <property type="match status" value="1"/>
</dbReference>
<dbReference type="NCBIfam" id="NF001860">
    <property type="entry name" value="PRK00595.1"/>
    <property type="match status" value="1"/>
</dbReference>
<dbReference type="NCBIfam" id="TIGR01023">
    <property type="entry name" value="rpmG_bact"/>
    <property type="match status" value="1"/>
</dbReference>
<dbReference type="PANTHER" id="PTHR43168">
    <property type="entry name" value="50S RIBOSOMAL PROTEIN L33, CHLOROPLASTIC"/>
    <property type="match status" value="1"/>
</dbReference>
<dbReference type="PANTHER" id="PTHR43168:SF2">
    <property type="entry name" value="LARGE RIBOSOMAL SUBUNIT PROTEIN BL33C"/>
    <property type="match status" value="1"/>
</dbReference>
<dbReference type="Pfam" id="PF00471">
    <property type="entry name" value="Ribosomal_L33"/>
    <property type="match status" value="1"/>
</dbReference>
<dbReference type="SUPFAM" id="SSF57829">
    <property type="entry name" value="Zn-binding ribosomal proteins"/>
    <property type="match status" value="1"/>
</dbReference>
<dbReference type="PROSITE" id="PS00582">
    <property type="entry name" value="RIBOSOMAL_L33"/>
    <property type="match status" value="1"/>
</dbReference>
<keyword id="KW-0687">Ribonucleoprotein</keyword>
<keyword id="KW-0689">Ribosomal protein</keyword>
<name>RL33_CLOPS</name>
<protein>
    <recommendedName>
        <fullName evidence="1">Large ribosomal subunit protein bL33</fullName>
    </recommendedName>
    <alternativeName>
        <fullName evidence="2">50S ribosomal protein L33</fullName>
    </alternativeName>
</protein>
<gene>
    <name evidence="1" type="primary">rpmG</name>
    <name type="ordered locus">CPR_2415</name>
</gene>